<reference key="1">
    <citation type="journal article" date="2006" name="Proc. Natl. Acad. Sci. U.S.A.">
        <title>Molecular genetic anatomy of inter- and intraserotype variation in the human bacterial pathogen group A Streptococcus.</title>
        <authorList>
            <person name="Beres S.B."/>
            <person name="Richter E.W."/>
            <person name="Nagiec M.J."/>
            <person name="Sumby P."/>
            <person name="Porcella S.F."/>
            <person name="DeLeo F.R."/>
            <person name="Musser J.M."/>
        </authorList>
    </citation>
    <scope>NUCLEOTIDE SEQUENCE [LARGE SCALE GENOMIC DNA]</scope>
    <source>
        <strain>MGAS10270</strain>
    </source>
</reference>
<evidence type="ECO:0000255" key="1">
    <source>
        <dbReference type="HAMAP-Rule" id="MF_00123"/>
    </source>
</evidence>
<protein>
    <recommendedName>
        <fullName evidence="1">Arginine--tRNA ligase</fullName>
        <ecNumber evidence="1">6.1.1.19</ecNumber>
    </recommendedName>
    <alternativeName>
        <fullName evidence="1">Arginyl-tRNA synthetase</fullName>
        <shortName evidence="1">ArgRS</shortName>
    </alternativeName>
</protein>
<feature type="chain" id="PRO_1000018130" description="Arginine--tRNA ligase">
    <location>
        <begin position="1"/>
        <end position="563"/>
    </location>
</feature>
<feature type="short sequence motif" description="'HIGH' region">
    <location>
        <begin position="121"/>
        <end position="131"/>
    </location>
</feature>
<name>SYR_STRPD</name>
<organism>
    <name type="scientific">Streptococcus pyogenes serotype M2 (strain MGAS10270)</name>
    <dbReference type="NCBI Taxonomy" id="370552"/>
    <lineage>
        <taxon>Bacteria</taxon>
        <taxon>Bacillati</taxon>
        <taxon>Bacillota</taxon>
        <taxon>Bacilli</taxon>
        <taxon>Lactobacillales</taxon>
        <taxon>Streptococcaceae</taxon>
        <taxon>Streptococcus</taxon>
    </lineage>
</organism>
<gene>
    <name evidence="1" type="primary">argS</name>
    <name type="ordered locus">MGAS10270_Spy1900</name>
</gene>
<sequence>MDTKTLIASEIAKVVPELEQDAIFNLLETPKNSDMGDLAFPAFSLAKVLRKAPQMIASELAEQIDESQFEKVVAVGPYINFFLDKTKISSQVLEQVITAGSDYAQQDEGQGRNVAIDMSSPNIAKPFSIGHLRSTVIGDSLAHIFAKMGYKPVKINHLGDWGKQFGMLIVAYKKWGDEAAVQAHPIDELLKLYVRINAEAETDPTVDEEAREWFRKLEDGDKEATELWQWFRDESLLEFNRLYDQLHVTFDSYNGEAFYNDKMDEVLDLLEAKNLLVESKGAQVVNLEKYGIEHPALIKKSDGATLYITRDLAAALYRKRTYDFAKSVYVVGNEQAAHFKQLKAVLKEMGYDWSDDMTHVAFGLVTKGGAKLSTRKGNVILLEPTVAEAINRAASQIEAKNPNLADKEAVAHSVGVGAIKFYDLKTDRMNGYDFDLEAMVSFEGETGPYVQYAHARIQSILRKADFTPSATTTYSLADAESWEIIKLIQDFPRIIKRTSDNFEPSIMAKFAINLAQSFNKYYAHTRILDDNSERDNRLALCYATATVLKEALRLLGVDAPNEM</sequence>
<proteinExistence type="inferred from homology"/>
<dbReference type="EC" id="6.1.1.19" evidence="1"/>
<dbReference type="EMBL" id="CP000260">
    <property type="protein sequence ID" value="ABF34965.1"/>
    <property type="molecule type" value="Genomic_DNA"/>
</dbReference>
<dbReference type="SMR" id="Q1JEG8"/>
<dbReference type="KEGG" id="sph:MGAS10270_Spy1900"/>
<dbReference type="HOGENOM" id="CLU_006406_6_1_9"/>
<dbReference type="Proteomes" id="UP000002436">
    <property type="component" value="Chromosome"/>
</dbReference>
<dbReference type="GO" id="GO:0005737">
    <property type="term" value="C:cytoplasm"/>
    <property type="evidence" value="ECO:0007669"/>
    <property type="project" value="UniProtKB-SubCell"/>
</dbReference>
<dbReference type="GO" id="GO:0004814">
    <property type="term" value="F:arginine-tRNA ligase activity"/>
    <property type="evidence" value="ECO:0007669"/>
    <property type="project" value="UniProtKB-UniRule"/>
</dbReference>
<dbReference type="GO" id="GO:0005524">
    <property type="term" value="F:ATP binding"/>
    <property type="evidence" value="ECO:0007669"/>
    <property type="project" value="UniProtKB-UniRule"/>
</dbReference>
<dbReference type="GO" id="GO:0006420">
    <property type="term" value="P:arginyl-tRNA aminoacylation"/>
    <property type="evidence" value="ECO:0007669"/>
    <property type="project" value="UniProtKB-UniRule"/>
</dbReference>
<dbReference type="CDD" id="cd07956">
    <property type="entry name" value="Anticodon_Ia_Arg"/>
    <property type="match status" value="1"/>
</dbReference>
<dbReference type="CDD" id="cd00671">
    <property type="entry name" value="ArgRS_core"/>
    <property type="match status" value="1"/>
</dbReference>
<dbReference type="FunFam" id="3.40.50.620:FF:000116">
    <property type="entry name" value="Arginine--tRNA ligase"/>
    <property type="match status" value="1"/>
</dbReference>
<dbReference type="FunFam" id="1.10.730.10:FF:000006">
    <property type="entry name" value="Arginyl-tRNA synthetase 2, mitochondrial"/>
    <property type="match status" value="1"/>
</dbReference>
<dbReference type="Gene3D" id="3.30.1360.70">
    <property type="entry name" value="Arginyl tRNA synthetase N-terminal domain"/>
    <property type="match status" value="1"/>
</dbReference>
<dbReference type="Gene3D" id="3.40.50.620">
    <property type="entry name" value="HUPs"/>
    <property type="match status" value="1"/>
</dbReference>
<dbReference type="Gene3D" id="1.10.730.10">
    <property type="entry name" value="Isoleucyl-tRNA Synthetase, Domain 1"/>
    <property type="match status" value="1"/>
</dbReference>
<dbReference type="HAMAP" id="MF_00123">
    <property type="entry name" value="Arg_tRNA_synth"/>
    <property type="match status" value="1"/>
</dbReference>
<dbReference type="InterPro" id="IPR001278">
    <property type="entry name" value="Arg-tRNA-ligase"/>
</dbReference>
<dbReference type="InterPro" id="IPR005148">
    <property type="entry name" value="Arg-tRNA-synth_N"/>
</dbReference>
<dbReference type="InterPro" id="IPR036695">
    <property type="entry name" value="Arg-tRNA-synth_N_sf"/>
</dbReference>
<dbReference type="InterPro" id="IPR035684">
    <property type="entry name" value="ArgRS_core"/>
</dbReference>
<dbReference type="InterPro" id="IPR008909">
    <property type="entry name" value="DALR_anticod-bd"/>
</dbReference>
<dbReference type="InterPro" id="IPR014729">
    <property type="entry name" value="Rossmann-like_a/b/a_fold"/>
</dbReference>
<dbReference type="InterPro" id="IPR009080">
    <property type="entry name" value="tRNAsynth_Ia_anticodon-bd"/>
</dbReference>
<dbReference type="NCBIfam" id="TIGR00456">
    <property type="entry name" value="argS"/>
    <property type="match status" value="1"/>
</dbReference>
<dbReference type="PANTHER" id="PTHR11956:SF5">
    <property type="entry name" value="ARGININE--TRNA LIGASE, CYTOPLASMIC"/>
    <property type="match status" value="1"/>
</dbReference>
<dbReference type="PANTHER" id="PTHR11956">
    <property type="entry name" value="ARGINYL-TRNA SYNTHETASE"/>
    <property type="match status" value="1"/>
</dbReference>
<dbReference type="Pfam" id="PF03485">
    <property type="entry name" value="Arg_tRNA_synt_N"/>
    <property type="match status" value="1"/>
</dbReference>
<dbReference type="Pfam" id="PF05746">
    <property type="entry name" value="DALR_1"/>
    <property type="match status" value="1"/>
</dbReference>
<dbReference type="Pfam" id="PF00750">
    <property type="entry name" value="tRNA-synt_1d"/>
    <property type="match status" value="1"/>
</dbReference>
<dbReference type="PRINTS" id="PR01038">
    <property type="entry name" value="TRNASYNTHARG"/>
</dbReference>
<dbReference type="SMART" id="SM01016">
    <property type="entry name" value="Arg_tRNA_synt_N"/>
    <property type="match status" value="1"/>
</dbReference>
<dbReference type="SMART" id="SM00836">
    <property type="entry name" value="DALR_1"/>
    <property type="match status" value="1"/>
</dbReference>
<dbReference type="SUPFAM" id="SSF47323">
    <property type="entry name" value="Anticodon-binding domain of a subclass of class I aminoacyl-tRNA synthetases"/>
    <property type="match status" value="1"/>
</dbReference>
<dbReference type="SUPFAM" id="SSF55190">
    <property type="entry name" value="Arginyl-tRNA synthetase (ArgRS), N-terminal 'additional' domain"/>
    <property type="match status" value="1"/>
</dbReference>
<dbReference type="SUPFAM" id="SSF52374">
    <property type="entry name" value="Nucleotidylyl transferase"/>
    <property type="match status" value="1"/>
</dbReference>
<keyword id="KW-0030">Aminoacyl-tRNA synthetase</keyword>
<keyword id="KW-0067">ATP-binding</keyword>
<keyword id="KW-0963">Cytoplasm</keyword>
<keyword id="KW-0436">Ligase</keyword>
<keyword id="KW-0547">Nucleotide-binding</keyword>
<keyword id="KW-0648">Protein biosynthesis</keyword>
<accession>Q1JEG8</accession>
<comment type="catalytic activity">
    <reaction evidence="1">
        <text>tRNA(Arg) + L-arginine + ATP = L-arginyl-tRNA(Arg) + AMP + diphosphate</text>
        <dbReference type="Rhea" id="RHEA:20301"/>
        <dbReference type="Rhea" id="RHEA-COMP:9658"/>
        <dbReference type="Rhea" id="RHEA-COMP:9673"/>
        <dbReference type="ChEBI" id="CHEBI:30616"/>
        <dbReference type="ChEBI" id="CHEBI:32682"/>
        <dbReference type="ChEBI" id="CHEBI:33019"/>
        <dbReference type="ChEBI" id="CHEBI:78442"/>
        <dbReference type="ChEBI" id="CHEBI:78513"/>
        <dbReference type="ChEBI" id="CHEBI:456215"/>
        <dbReference type="EC" id="6.1.1.19"/>
    </reaction>
</comment>
<comment type="subunit">
    <text evidence="1">Monomer.</text>
</comment>
<comment type="subcellular location">
    <subcellularLocation>
        <location evidence="1">Cytoplasm</location>
    </subcellularLocation>
</comment>
<comment type="similarity">
    <text evidence="1">Belongs to the class-I aminoacyl-tRNA synthetase family.</text>
</comment>